<gene>
    <name evidence="1" type="primary">ppcA</name>
    <name type="ordered locus">PAE3416</name>
</gene>
<sequence length="460" mass="51486">MYIPCLMCTQHPDSTVKITAGEEVDEAVVAFLAYGCDEVMVDYEGKATPYSQPRDVASKALALGLPLGERFFITPRVPNPRLEDFERSMLSLEAAVLANSYSQRAAGVQAVKWVVLPMTEDVETMAFVYKALDMKARDLAELNAVKRDSSIELIPLVEDAMRQIKIESFIKALFRTAAQSGRILEHMRIFLGISDSAVRHGHMASALAMVKALGQISEINRDGEFKISPIVGMGSPPFRGGLNNPHLAVPEAAQYAGYKTATIQSAVRYDVSYAEYQKVREAILSVYTPRRLHVEEAWITKASELYREAIRPYIGKIAELANAIPSTRDRVSWREYGRVIEGVEWRVPRAIVYTATWYFAGVPPTLLDARFIAWAYKNDLLDDVLRALPATVEEWKFESRFYSRERAEKTLGGEIVKDIDNAFDILGIKPEPDRTYITLLNSADTQPHAIALGRIRGFLG</sequence>
<feature type="chain" id="PRO_0000309607" description="Phosphoenolpyruvate carboxylase">
    <location>
        <begin position="1"/>
        <end position="460"/>
    </location>
</feature>
<comment type="function">
    <text evidence="1">Catalyzes the irreversible beta-carboxylation of phosphoenolpyruvate (PEP) to form oxaloacetate (OAA), a four-carbon dicarboxylic acid source for the tricarboxylic acid cycle.</text>
</comment>
<comment type="catalytic activity">
    <reaction evidence="1">
        <text>oxaloacetate + phosphate = phosphoenolpyruvate + hydrogencarbonate</text>
        <dbReference type="Rhea" id="RHEA:28370"/>
        <dbReference type="ChEBI" id="CHEBI:16452"/>
        <dbReference type="ChEBI" id="CHEBI:17544"/>
        <dbReference type="ChEBI" id="CHEBI:43474"/>
        <dbReference type="ChEBI" id="CHEBI:58702"/>
        <dbReference type="EC" id="4.1.1.31"/>
    </reaction>
</comment>
<comment type="cofactor">
    <cofactor evidence="1">
        <name>Mg(2+)</name>
        <dbReference type="ChEBI" id="CHEBI:18420"/>
    </cofactor>
</comment>
<comment type="subunit">
    <text evidence="1">Homotetramer.</text>
</comment>
<comment type="similarity">
    <text evidence="1">Belongs to the PEPCase type 2 family.</text>
</comment>
<evidence type="ECO:0000255" key="1">
    <source>
        <dbReference type="HAMAP-Rule" id="MF_01904"/>
    </source>
</evidence>
<proteinExistence type="inferred from homology"/>
<organism>
    <name type="scientific">Pyrobaculum aerophilum (strain ATCC 51768 / DSM 7523 / JCM 9630 / CIP 104966 / NBRC 100827 / IM2)</name>
    <dbReference type="NCBI Taxonomy" id="178306"/>
    <lineage>
        <taxon>Archaea</taxon>
        <taxon>Thermoproteota</taxon>
        <taxon>Thermoprotei</taxon>
        <taxon>Thermoproteales</taxon>
        <taxon>Thermoproteaceae</taxon>
        <taxon>Pyrobaculum</taxon>
    </lineage>
</organism>
<accession>Q8ZT64</accession>
<dbReference type="EC" id="4.1.1.31" evidence="1"/>
<dbReference type="EMBL" id="AE009441">
    <property type="protein sequence ID" value="AAL64899.1"/>
    <property type="molecule type" value="Genomic_DNA"/>
</dbReference>
<dbReference type="RefSeq" id="WP_011009366.1">
    <property type="nucleotide sequence ID" value="NC_003364.1"/>
</dbReference>
<dbReference type="SMR" id="Q8ZT64"/>
<dbReference type="FunCoup" id="Q8ZT64">
    <property type="interactions" value="66"/>
</dbReference>
<dbReference type="STRING" id="178306.PAE3416"/>
<dbReference type="EnsemblBacteria" id="AAL64899">
    <property type="protein sequence ID" value="AAL64899"/>
    <property type="gene ID" value="PAE3416"/>
</dbReference>
<dbReference type="GeneID" id="1464096"/>
<dbReference type="KEGG" id="pai:PAE3416"/>
<dbReference type="PATRIC" id="fig|178306.9.peg.2568"/>
<dbReference type="eggNOG" id="arCOG04435">
    <property type="taxonomic scope" value="Archaea"/>
</dbReference>
<dbReference type="HOGENOM" id="CLU_517433_0_0_2"/>
<dbReference type="InParanoid" id="Q8ZT64"/>
<dbReference type="Proteomes" id="UP000002439">
    <property type="component" value="Chromosome"/>
</dbReference>
<dbReference type="GO" id="GO:0000287">
    <property type="term" value="F:magnesium ion binding"/>
    <property type="evidence" value="ECO:0007669"/>
    <property type="project" value="UniProtKB-UniRule"/>
</dbReference>
<dbReference type="GO" id="GO:0008964">
    <property type="term" value="F:phosphoenolpyruvate carboxylase activity"/>
    <property type="evidence" value="ECO:0007669"/>
    <property type="project" value="UniProtKB-UniRule"/>
</dbReference>
<dbReference type="GO" id="GO:0015977">
    <property type="term" value="P:carbon fixation"/>
    <property type="evidence" value="ECO:0007669"/>
    <property type="project" value="UniProtKB-UniRule"/>
</dbReference>
<dbReference type="GO" id="GO:0006107">
    <property type="term" value="P:oxaloacetate metabolic process"/>
    <property type="evidence" value="ECO:0007669"/>
    <property type="project" value="UniProtKB-UniRule"/>
</dbReference>
<dbReference type="GO" id="GO:0006099">
    <property type="term" value="P:tricarboxylic acid cycle"/>
    <property type="evidence" value="ECO:0007669"/>
    <property type="project" value="InterPro"/>
</dbReference>
<dbReference type="HAMAP" id="MF_01904">
    <property type="entry name" value="PEPcase_type2"/>
    <property type="match status" value="1"/>
</dbReference>
<dbReference type="InterPro" id="IPR007566">
    <property type="entry name" value="PEP_COase_arc-type"/>
</dbReference>
<dbReference type="InterPro" id="IPR015813">
    <property type="entry name" value="Pyrv/PenolPyrv_kinase-like_dom"/>
</dbReference>
<dbReference type="NCBIfam" id="TIGR02751">
    <property type="entry name" value="PEPCase_arch"/>
    <property type="match status" value="1"/>
</dbReference>
<dbReference type="Pfam" id="PF14010">
    <property type="entry name" value="PEPcase_2"/>
    <property type="match status" value="1"/>
</dbReference>
<dbReference type="PIRSF" id="PIRSF006677">
    <property type="entry name" value="UCP006677"/>
    <property type="match status" value="1"/>
</dbReference>
<dbReference type="SUPFAM" id="SSF51621">
    <property type="entry name" value="Phosphoenolpyruvate/pyruvate domain"/>
    <property type="match status" value="1"/>
</dbReference>
<name>CAPPA_PYRAE</name>
<reference key="1">
    <citation type="journal article" date="2002" name="Proc. Natl. Acad. Sci. U.S.A.">
        <title>Genome sequence of the hyperthermophilic crenarchaeon Pyrobaculum aerophilum.</title>
        <authorList>
            <person name="Fitz-Gibbon S.T."/>
            <person name="Ladner H."/>
            <person name="Kim U.-J."/>
            <person name="Stetter K.O."/>
            <person name="Simon M.I."/>
            <person name="Miller J.H."/>
        </authorList>
    </citation>
    <scope>NUCLEOTIDE SEQUENCE [LARGE SCALE GENOMIC DNA]</scope>
    <source>
        <strain>ATCC 51768 / DSM 7523 / JCM 9630 / CIP 104966 / NBRC 100827 / IM2</strain>
    </source>
</reference>
<protein>
    <recommendedName>
        <fullName evidence="1">Phosphoenolpyruvate carboxylase</fullName>
        <shortName evidence="1">PEPC</shortName>
        <shortName evidence="1">PEPCase</shortName>
        <ecNumber evidence="1">4.1.1.31</ecNumber>
    </recommendedName>
</protein>
<keyword id="KW-0120">Carbon dioxide fixation</keyword>
<keyword id="KW-0456">Lyase</keyword>
<keyword id="KW-0460">Magnesium</keyword>
<keyword id="KW-1185">Reference proteome</keyword>